<organism>
    <name type="scientific">Lelliottia amnigena</name>
    <name type="common">Enterobacter amnigenus</name>
    <dbReference type="NCBI Taxonomy" id="61646"/>
    <lineage>
        <taxon>Bacteria</taxon>
        <taxon>Pseudomonadati</taxon>
        <taxon>Pseudomonadota</taxon>
        <taxon>Gammaproteobacteria</taxon>
        <taxon>Enterobacterales</taxon>
        <taxon>Enterobacteriaceae</taxon>
        <taxon>Lelliottia</taxon>
    </lineage>
</organism>
<comment type="function">
    <text evidence="3">Catalyzes the transfer of a sulfate group from a phenyl sulfate ester to other phenolic compounds. Is able to use several substrate donors and acceptors in vitro: using phenol as an acceptor substrate, 4-methylumbelliferyl sulfate is the best donor substrate, followed by beta-naphthyl sulfate, p-nitrophenyl sulfate (PNS), and alpha-naphthyl sulfate; using PNS as a donor substrate, alpha-naphthol is the best acceptor substrate, followed by phenol, resorcinol, p-acetaminophen, tyramine, and tyrosine. Cannot use 3'-phosphoadenosine-5'-phophosulfate (PAPS), the donor substrate of mammalian sulfotransferase. May be a detoxifying enzyme, converting toxic phenolic compounds into non-toxic materials.</text>
</comment>
<comment type="catalytic activity">
    <reaction evidence="3">
        <text>an aryl sulfate + a phenol = an aryl sulfate + a phenol</text>
        <dbReference type="Rhea" id="RHEA:51072"/>
        <dbReference type="ChEBI" id="CHEBI:33853"/>
        <dbReference type="ChEBI" id="CHEBI:140317"/>
        <dbReference type="EC" id="2.8.2.22"/>
    </reaction>
</comment>
<comment type="catalytic activity">
    <reaction evidence="3">
        <text>4-methylumbelliferone sulfate + phenol = phenyl sulfate + 4-methylumbelliferone</text>
        <dbReference type="Rhea" id="RHEA:79263"/>
        <dbReference type="ChEBI" id="CHEBI:15882"/>
        <dbReference type="ChEBI" id="CHEBI:17224"/>
        <dbReference type="ChEBI" id="CHEBI:85289"/>
        <dbReference type="ChEBI" id="CHEBI:144581"/>
    </reaction>
</comment>
<comment type="catalytic activity">
    <reaction evidence="3">
        <text>2-naphthyl sulfate + phenol = phenyl sulfate + 2-naphthol</text>
        <dbReference type="Rhea" id="RHEA:79267"/>
        <dbReference type="ChEBI" id="CHEBI:10432"/>
        <dbReference type="ChEBI" id="CHEBI:15882"/>
        <dbReference type="ChEBI" id="CHEBI:85289"/>
        <dbReference type="ChEBI" id="CHEBI:167170"/>
    </reaction>
</comment>
<comment type="biophysicochemical properties">
    <kinetics>
        <KM evidence="3">0.163 mM for p-nitrophenyl sulfate</KM>
        <KM evidence="3">0.314 mM for phenol</KM>
    </kinetics>
    <phDependence>
        <text evidence="3">Optimum pH is 9.0 using p-nitrophenyl sulfate as a donor and phenol as an acceptor substrate.</text>
    </phDependence>
</comment>
<comment type="subunit">
    <text evidence="3">Monomer.</text>
</comment>
<comment type="subcellular location">
    <subcellularLocation>
        <location evidence="5">Periplasm</location>
    </subcellularLocation>
</comment>
<comment type="similarity">
    <text evidence="2">Belongs to the aryl sulfotransferase family.</text>
</comment>
<reference key="1">
    <citation type="journal article" date="1999" name="Protein Expr. Purif.">
        <title>Molecular cloning of the arylsulfate sulfotransferase gene and characterization of its product from Enterobacter amnigenus AR-37.</title>
        <authorList>
            <person name="Kwon A.-R."/>
            <person name="Oh T.-G."/>
            <person name="Kim D.-H."/>
            <person name="Choi E.-C."/>
        </authorList>
    </citation>
    <scope>NUCLEOTIDE SEQUENCE [GENOMIC DNA]</scope>
    <scope>PROTEIN SEQUENCE OF 28-37</scope>
    <scope>FUNCTION</scope>
    <scope>CATALYTIC ACTIVITY</scope>
    <scope>SUBSTRATE SPECIFICITY</scope>
    <scope>BIOPHYSICOCHEMICAL PROPERTIES</scope>
    <scope>SUBUNIT</scope>
    <source>
        <strain>AR-37</strain>
    </source>
</reference>
<feature type="signal peptide" evidence="3">
    <location>
        <begin position="1"/>
        <end position="27"/>
    </location>
</feature>
<feature type="chain" id="PRO_5009019430" description="Arylsulfate sulfotransferase AssT">
    <location>
        <begin position="28"/>
        <end position="598"/>
    </location>
</feature>
<feature type="active site" description="Nucleophile; sulfurylated histidine covalent intermediate" evidence="2">
    <location>
        <position position="463"/>
    </location>
</feature>
<feature type="binding site" evidence="1">
    <location>
        <position position="279"/>
    </location>
    <ligand>
        <name>4-methylumbelliferone</name>
        <dbReference type="ChEBI" id="CHEBI:17224"/>
    </ligand>
</feature>
<feature type="binding site" evidence="1">
    <location>
        <position position="383"/>
    </location>
    <ligand>
        <name>4-methylumbelliferone</name>
        <dbReference type="ChEBI" id="CHEBI:17224"/>
    </ligand>
</feature>
<feature type="binding site" evidence="1">
    <location>
        <position position="463"/>
    </location>
    <ligand>
        <name>4-methylumbelliferone</name>
        <dbReference type="ChEBI" id="CHEBI:17224"/>
    </ligand>
</feature>
<feature type="disulfide bond" evidence="2">
    <location>
        <begin position="445"/>
        <end position="451"/>
    </location>
</feature>
<proteinExistence type="evidence at protein level"/>
<protein>
    <recommendedName>
        <fullName evidence="4">Arylsulfate sulfotransferase AssT</fullName>
        <ecNumber evidence="3">2.8.2.22</ecNumber>
    </recommendedName>
    <alternativeName>
        <fullName evidence="2">Aryl sulfotransferase AssT</fullName>
    </alternativeName>
</protein>
<gene>
    <name evidence="4 6" type="primary">astA</name>
    <name evidence="2" type="synonym">assT</name>
</gene>
<name>ASST_LELAM</name>
<sequence>MFHPYRKTLLSGTVALALGLFATGAIAAGFQPAQPAGKLGAIVVDPYGNAPLTALIELDSHTISDVKVTVHGKGEKGVPVSYSVGKQSLATYDGIPVFGLYQKHANKVTVEYTENGKAMKEDYVIQTSAIVNRYMDNRSISDLQKTKVIKVAPGFEDRLYLVNTHTFTPQGAEFHWHGEKDKNAGLLDAGPAAGALPFDIAPFTFVVDTEGEYRWWLDQDTFYDGHDMNINKRGYLMGIRETPRGTFTAVQGQHWYEFDMMGQVLADHKLPRGFLDATHESIETVNGTVLLRVGKRNYRKEDGLHVHTIRDQIIEVDKSGRVIDVWDLTKILDPLRDSLLGALDAGAVCVNVDLEHAGQQAKLEPDTPFGDALGVGAERNWAHVNPIAYDAKDDAIILSSRHQGIVKIGSDKKVKWILAPAKGWNKQLASKLLKPVDSKGNPLTCNENGKCENTDFDFSYTQHTAWLTDKGTLTVFDNGDGRWLEQPALPSMKYSRFVEYKIDEKNGTVQPLWQYGKERGYDFYSPITSVIEYQKDRDTIFGFSGSINLFEVGQPTIGKINEIDYKTKDVKVEIDVLSDKPNQTHYRALLVHPQQMFK</sequence>
<keyword id="KW-0903">Direct protein sequencing</keyword>
<keyword id="KW-1015">Disulfide bond</keyword>
<keyword id="KW-0574">Periplasm</keyword>
<keyword id="KW-0732">Signal</keyword>
<keyword id="KW-0808">Transferase</keyword>
<evidence type="ECO:0000250" key="1">
    <source>
        <dbReference type="UniProtKB" id="Q8FDI4"/>
    </source>
</evidence>
<evidence type="ECO:0000255" key="2">
    <source>
        <dbReference type="HAMAP-Rule" id="MF_00933"/>
    </source>
</evidence>
<evidence type="ECO:0000269" key="3">
    <source>
    </source>
</evidence>
<evidence type="ECO:0000303" key="4">
    <source>
    </source>
</evidence>
<evidence type="ECO:0000305" key="5">
    <source>
    </source>
</evidence>
<evidence type="ECO:0000312" key="6">
    <source>
        <dbReference type="EMBL" id="AAD41460.1"/>
    </source>
</evidence>
<accession>Q9XDP2</accession>
<dbReference type="EC" id="2.8.2.22" evidence="3"/>
<dbReference type="EMBL" id="AF012826">
    <property type="protein sequence ID" value="AAD41460.1"/>
    <property type="molecule type" value="Genomic_DNA"/>
</dbReference>
<dbReference type="SMR" id="Q9XDP2"/>
<dbReference type="BRENDA" id="2.8.2.22">
    <property type="organism ID" value="2085"/>
</dbReference>
<dbReference type="GO" id="GO:0042597">
    <property type="term" value="C:periplasmic space"/>
    <property type="evidence" value="ECO:0007669"/>
    <property type="project" value="UniProtKB-SubCell"/>
</dbReference>
<dbReference type="GO" id="GO:0004062">
    <property type="term" value="F:aryl sulfotransferase activity"/>
    <property type="evidence" value="ECO:0007669"/>
    <property type="project" value="InterPro"/>
</dbReference>
<dbReference type="GO" id="GO:0047686">
    <property type="term" value="F:arylsulfate sulfotransferase activity"/>
    <property type="evidence" value="ECO:0007669"/>
    <property type="project" value="UniProtKB-UniRule"/>
</dbReference>
<dbReference type="Gene3D" id="2.60.40.3100">
    <property type="entry name" value="Arylsulphate sulphotransferase monomer, N-terminal domain"/>
    <property type="match status" value="1"/>
</dbReference>
<dbReference type="HAMAP" id="MF_00933">
    <property type="entry name" value="Arylsulfotrans_AssT"/>
    <property type="match status" value="1"/>
</dbReference>
<dbReference type="InterPro" id="IPR053143">
    <property type="entry name" value="Arylsulfate_ST"/>
</dbReference>
<dbReference type="InterPro" id="IPR035391">
    <property type="entry name" value="Arylsulfotran_N"/>
</dbReference>
<dbReference type="InterPro" id="IPR010262">
    <property type="entry name" value="Arylsulfotransferase_bact"/>
</dbReference>
<dbReference type="InterPro" id="IPR028610">
    <property type="entry name" value="AssT_Enterobac"/>
</dbReference>
<dbReference type="InterPro" id="IPR038477">
    <property type="entry name" value="ASST_N_sf"/>
</dbReference>
<dbReference type="PANTHER" id="PTHR35340:SF10">
    <property type="entry name" value="CYTOPLASMIC PROTEIN"/>
    <property type="match status" value="1"/>
</dbReference>
<dbReference type="PANTHER" id="PTHR35340">
    <property type="entry name" value="PQQ ENZYME REPEAT PROTEIN-RELATED"/>
    <property type="match status" value="1"/>
</dbReference>
<dbReference type="Pfam" id="PF17425">
    <property type="entry name" value="Arylsulfotran_N"/>
    <property type="match status" value="1"/>
</dbReference>
<dbReference type="Pfam" id="PF05935">
    <property type="entry name" value="Arylsulfotrans"/>
    <property type="match status" value="1"/>
</dbReference>